<gene>
    <name type="primary">TPGS2</name>
    <name type="synonym">C18orf10</name>
    <name type="ORF">HMFN0601</name>
    <name type="ORF">L17</name>
</gene>
<evidence type="ECO:0000256" key="1">
    <source>
        <dbReference type="SAM" id="MobiDB-lite"/>
    </source>
</evidence>
<evidence type="ECO:0000269" key="2">
    <source>
    </source>
</evidence>
<evidence type="ECO:0000303" key="3">
    <source>
    </source>
</evidence>
<evidence type="ECO:0000303" key="4">
    <source>
    </source>
</evidence>
<evidence type="ECO:0000303" key="5">
    <source>
    </source>
</evidence>
<evidence type="ECO:0000305" key="6"/>
<evidence type="ECO:0000305" key="7">
    <source>
    </source>
</evidence>
<dbReference type="EMBL" id="AK295817">
    <property type="protein sequence ID" value="BAG58634.1"/>
    <property type="molecule type" value="mRNA"/>
</dbReference>
<dbReference type="EMBL" id="AB073382">
    <property type="protein sequence ID" value="BAD38633.1"/>
    <property type="molecule type" value="mRNA"/>
</dbReference>
<dbReference type="EMBL" id="AC009854">
    <property type="status" value="NOT_ANNOTATED_CDS"/>
    <property type="molecule type" value="Genomic_DNA"/>
</dbReference>
<dbReference type="EMBL" id="AC090333">
    <property type="status" value="NOT_ANNOTATED_CDS"/>
    <property type="molecule type" value="Genomic_DNA"/>
</dbReference>
<dbReference type="EMBL" id="BC015178">
    <property type="protein sequence ID" value="AAH15178.2"/>
    <property type="molecule type" value="mRNA"/>
</dbReference>
<dbReference type="EMBL" id="BC022199">
    <property type="protein sequence ID" value="AAH22199.2"/>
    <property type="status" value="ALT_INIT"/>
    <property type="molecule type" value="mRNA"/>
</dbReference>
<dbReference type="EMBL" id="BC087845">
    <property type="protein sequence ID" value="AAH87845.1"/>
    <property type="molecule type" value="mRNA"/>
</dbReference>
<dbReference type="EMBL" id="AL050225">
    <property type="protein sequence ID" value="CAB43322.2"/>
    <property type="status" value="ALT_INIT"/>
    <property type="molecule type" value="mRNA"/>
</dbReference>
<dbReference type="EMBL" id="AY598336">
    <property type="protein sequence ID" value="AAT06747.1"/>
    <property type="molecule type" value="mRNA"/>
</dbReference>
<dbReference type="CCDS" id="CCDS32817.1">
    <molecule id="Q68CL5-2"/>
</dbReference>
<dbReference type="CCDS" id="CCDS62421.1">
    <molecule id="Q68CL5-1"/>
</dbReference>
<dbReference type="CCDS" id="CCDS62422.1">
    <molecule id="Q68CL5-4"/>
</dbReference>
<dbReference type="CCDS" id="CCDS62423.1">
    <molecule id="Q68CL5-3"/>
</dbReference>
<dbReference type="CCDS" id="CCDS62424.1">
    <molecule id="Q68CL5-5"/>
</dbReference>
<dbReference type="PIR" id="T08811">
    <property type="entry name" value="T08811"/>
</dbReference>
<dbReference type="RefSeq" id="NP_001258878.1">
    <molecule id="Q68CL5-4"/>
    <property type="nucleotide sequence ID" value="NM_001271949.2"/>
</dbReference>
<dbReference type="RefSeq" id="NP_001258879.1">
    <molecule id="Q68CL5-1"/>
    <property type="nucleotide sequence ID" value="NM_001271950.2"/>
</dbReference>
<dbReference type="RefSeq" id="NP_001258880.1">
    <molecule id="Q68CL5-5"/>
    <property type="nucleotide sequence ID" value="NM_001271951.2"/>
</dbReference>
<dbReference type="RefSeq" id="NP_001258881.1">
    <property type="nucleotide sequence ID" value="NM_001271952.1"/>
</dbReference>
<dbReference type="RefSeq" id="NP_001258883.1">
    <molecule id="Q68CL5-3"/>
    <property type="nucleotide sequence ID" value="NM_001271954.2"/>
</dbReference>
<dbReference type="RefSeq" id="NP_056291.2">
    <molecule id="Q68CL5-2"/>
    <property type="nucleotide sequence ID" value="NM_015476.4"/>
</dbReference>
<dbReference type="BioGRID" id="117438">
    <property type="interactions" value="24"/>
</dbReference>
<dbReference type="ComplexPortal" id="CPX-2572">
    <property type="entry name" value="Tubulin polyglutamylase complex"/>
</dbReference>
<dbReference type="FunCoup" id="Q68CL5">
    <property type="interactions" value="818"/>
</dbReference>
<dbReference type="IntAct" id="Q68CL5">
    <property type="interactions" value="19"/>
</dbReference>
<dbReference type="STRING" id="9606.ENSP00000464780"/>
<dbReference type="iPTMnet" id="Q68CL5"/>
<dbReference type="PhosphoSitePlus" id="Q68CL5"/>
<dbReference type="BioMuta" id="TPGS2"/>
<dbReference type="DMDM" id="114152891"/>
<dbReference type="jPOST" id="Q68CL5"/>
<dbReference type="MassIVE" id="Q68CL5"/>
<dbReference type="PaxDb" id="9606-ENSP00000464780"/>
<dbReference type="PeptideAtlas" id="Q68CL5"/>
<dbReference type="ProteomicsDB" id="66006">
    <molecule id="Q68CL5-2"/>
</dbReference>
<dbReference type="ProteomicsDB" id="66007">
    <molecule id="Q68CL5-1"/>
</dbReference>
<dbReference type="ProteomicsDB" id="66008">
    <molecule id="Q68CL5-3"/>
</dbReference>
<dbReference type="Pumba" id="Q68CL5"/>
<dbReference type="Antibodypedia" id="22336">
    <property type="antibodies" value="111 antibodies from 16 providers"/>
</dbReference>
<dbReference type="DNASU" id="25941"/>
<dbReference type="Ensembl" id="ENST00000334295.9">
    <molecule id="Q68CL5-2"/>
    <property type="protein sequence ID" value="ENSP00000335144.3"/>
    <property type="gene ID" value="ENSG00000134779.15"/>
</dbReference>
<dbReference type="Ensembl" id="ENST00000383056.7">
    <molecule id="Q68CL5-1"/>
    <property type="protein sequence ID" value="ENSP00000372530.2"/>
    <property type="gene ID" value="ENSG00000134779.15"/>
</dbReference>
<dbReference type="Ensembl" id="ENST00000589049.5">
    <molecule id="Q68CL5-3"/>
    <property type="protein sequence ID" value="ENSP00000466973.1"/>
    <property type="gene ID" value="ENSG00000134779.15"/>
</dbReference>
<dbReference type="Ensembl" id="ENST00000590842.5">
    <molecule id="Q68CL5-5"/>
    <property type="protein sequence ID" value="ENSP00000464780.1"/>
    <property type="gene ID" value="ENSG00000134779.15"/>
</dbReference>
<dbReference type="Ensembl" id="ENST00000593035.5">
    <molecule id="Q68CL5-4"/>
    <property type="protein sequence ID" value="ENSP00000467392.1"/>
    <property type="gene ID" value="ENSG00000134779.15"/>
</dbReference>
<dbReference type="GeneID" id="25941"/>
<dbReference type="KEGG" id="hsa:25941"/>
<dbReference type="MANE-Select" id="ENST00000334295.9">
    <property type="protein sequence ID" value="ENSP00000335144.3"/>
    <property type="RefSeq nucleotide sequence ID" value="NM_015476.4"/>
    <property type="RefSeq protein sequence ID" value="NP_056291.2"/>
</dbReference>
<dbReference type="UCSC" id="uc002kzw.3">
    <molecule id="Q68CL5-2"/>
    <property type="organism name" value="human"/>
</dbReference>
<dbReference type="AGR" id="HGNC:24561"/>
<dbReference type="CTD" id="25941"/>
<dbReference type="DisGeNET" id="25941"/>
<dbReference type="GeneCards" id="TPGS2"/>
<dbReference type="HGNC" id="HGNC:24561">
    <property type="gene designation" value="TPGS2"/>
</dbReference>
<dbReference type="HPA" id="ENSG00000134779">
    <property type="expression patterns" value="Tissue enhanced (choroid)"/>
</dbReference>
<dbReference type="MIM" id="620710">
    <property type="type" value="gene"/>
</dbReference>
<dbReference type="neXtProt" id="NX_Q68CL5"/>
<dbReference type="OpenTargets" id="ENSG00000134779"/>
<dbReference type="PharmGKB" id="PA128394637"/>
<dbReference type="VEuPathDB" id="HostDB:ENSG00000134779"/>
<dbReference type="eggNOG" id="ENOG502R21Z">
    <property type="taxonomic scope" value="Eukaryota"/>
</dbReference>
<dbReference type="GeneTree" id="ENSGT00390000018344"/>
<dbReference type="HOGENOM" id="CLU_079178_0_0_1"/>
<dbReference type="InParanoid" id="Q68CL5"/>
<dbReference type="OMA" id="WQFLAET"/>
<dbReference type="OrthoDB" id="10249691at2759"/>
<dbReference type="PAN-GO" id="Q68CL5">
    <property type="GO annotations" value="0 GO annotations based on evolutionary models"/>
</dbReference>
<dbReference type="PhylomeDB" id="Q68CL5"/>
<dbReference type="TreeFam" id="TF325540"/>
<dbReference type="PathwayCommons" id="Q68CL5"/>
<dbReference type="Reactome" id="R-HSA-8955332">
    <property type="pathway name" value="Carboxyterminal post-translational modifications of tubulin"/>
</dbReference>
<dbReference type="SignaLink" id="Q68CL5"/>
<dbReference type="BioGRID-ORCS" id="25941">
    <property type="hits" value="11 hits in 1152 CRISPR screens"/>
</dbReference>
<dbReference type="ChiTaRS" id="TPGS2">
    <property type="organism name" value="human"/>
</dbReference>
<dbReference type="GenomeRNAi" id="25941"/>
<dbReference type="Pharos" id="Q68CL5">
    <property type="development level" value="Tdark"/>
</dbReference>
<dbReference type="PRO" id="PR:Q68CL5"/>
<dbReference type="Proteomes" id="UP000005640">
    <property type="component" value="Chromosome 18"/>
</dbReference>
<dbReference type="RNAct" id="Q68CL5">
    <property type="molecule type" value="protein"/>
</dbReference>
<dbReference type="Bgee" id="ENSG00000134779">
    <property type="expression patterns" value="Expressed in ganglionic eminence and 200 other cell types or tissues"/>
</dbReference>
<dbReference type="ExpressionAtlas" id="Q68CL5">
    <property type="expression patterns" value="baseline and differential"/>
</dbReference>
<dbReference type="GO" id="GO:0034451">
    <property type="term" value="C:centriolar satellite"/>
    <property type="evidence" value="ECO:0007669"/>
    <property type="project" value="UniProtKB-SubCell"/>
</dbReference>
<dbReference type="GO" id="GO:0005737">
    <property type="term" value="C:cytoplasm"/>
    <property type="evidence" value="ECO:0007669"/>
    <property type="project" value="UniProtKB-KW"/>
</dbReference>
<dbReference type="GO" id="GO:0005874">
    <property type="term" value="C:microtubule"/>
    <property type="evidence" value="ECO:0007669"/>
    <property type="project" value="UniProtKB-KW"/>
</dbReference>
<dbReference type="InterPro" id="IPR018958">
    <property type="entry name" value="Knr4/Smi1-like_dom"/>
</dbReference>
<dbReference type="InterPro" id="IPR037883">
    <property type="entry name" value="Knr4/Smi1-like_sf"/>
</dbReference>
<dbReference type="InterPro" id="IPR039231">
    <property type="entry name" value="TPGS2"/>
</dbReference>
<dbReference type="PANTHER" id="PTHR31854">
    <property type="entry name" value="TUBULIN POLYGLUTAMYLASE COMPLEX SUBUNIT 2"/>
    <property type="match status" value="1"/>
</dbReference>
<dbReference type="PANTHER" id="PTHR31854:SF2">
    <property type="entry name" value="TUBULIN POLYGLUTAMYLASE COMPLEX SUBUNIT 2"/>
    <property type="match status" value="1"/>
</dbReference>
<dbReference type="SMART" id="SM00860">
    <property type="entry name" value="SMI1_KNR4"/>
    <property type="match status" value="1"/>
</dbReference>
<dbReference type="SUPFAM" id="SSF160631">
    <property type="entry name" value="SMI1/KNR4-like"/>
    <property type="match status" value="1"/>
</dbReference>
<proteinExistence type="evidence at protein level"/>
<keyword id="KW-0025">Alternative splicing</keyword>
<keyword id="KW-0963">Cytoplasm</keyword>
<keyword id="KW-0206">Cytoskeleton</keyword>
<keyword id="KW-0493">Microtubule</keyword>
<keyword id="KW-1267">Proteomics identification</keyword>
<keyword id="KW-1185">Reference proteome</keyword>
<reference key="1">
    <citation type="journal article" date="2004" name="Nat. Genet.">
        <title>Complete sequencing and characterization of 21,243 full-length human cDNAs.</title>
        <authorList>
            <person name="Ota T."/>
            <person name="Suzuki Y."/>
            <person name="Nishikawa T."/>
            <person name="Otsuki T."/>
            <person name="Sugiyama T."/>
            <person name="Irie R."/>
            <person name="Wakamatsu A."/>
            <person name="Hayashi K."/>
            <person name="Sato H."/>
            <person name="Nagai K."/>
            <person name="Kimura K."/>
            <person name="Makita H."/>
            <person name="Sekine M."/>
            <person name="Obayashi M."/>
            <person name="Nishi T."/>
            <person name="Shibahara T."/>
            <person name="Tanaka T."/>
            <person name="Ishii S."/>
            <person name="Yamamoto J."/>
            <person name="Saito K."/>
            <person name="Kawai Y."/>
            <person name="Isono Y."/>
            <person name="Nakamura Y."/>
            <person name="Nagahari K."/>
            <person name="Murakami K."/>
            <person name="Yasuda T."/>
            <person name="Iwayanagi T."/>
            <person name="Wagatsuma M."/>
            <person name="Shiratori A."/>
            <person name="Sudo H."/>
            <person name="Hosoiri T."/>
            <person name="Kaku Y."/>
            <person name="Kodaira H."/>
            <person name="Kondo H."/>
            <person name="Sugawara M."/>
            <person name="Takahashi M."/>
            <person name="Kanda K."/>
            <person name="Yokoi T."/>
            <person name="Furuya T."/>
            <person name="Kikkawa E."/>
            <person name="Omura Y."/>
            <person name="Abe K."/>
            <person name="Kamihara K."/>
            <person name="Katsuta N."/>
            <person name="Sato K."/>
            <person name="Tanikawa M."/>
            <person name="Yamazaki M."/>
            <person name="Ninomiya K."/>
            <person name="Ishibashi T."/>
            <person name="Yamashita H."/>
            <person name="Murakawa K."/>
            <person name="Fujimori K."/>
            <person name="Tanai H."/>
            <person name="Kimata M."/>
            <person name="Watanabe M."/>
            <person name="Hiraoka S."/>
            <person name="Chiba Y."/>
            <person name="Ishida S."/>
            <person name="Ono Y."/>
            <person name="Takiguchi S."/>
            <person name="Watanabe S."/>
            <person name="Yosida M."/>
            <person name="Hotuta T."/>
            <person name="Kusano J."/>
            <person name="Kanehori K."/>
            <person name="Takahashi-Fujii A."/>
            <person name="Hara H."/>
            <person name="Tanase T.-O."/>
            <person name="Nomura Y."/>
            <person name="Togiya S."/>
            <person name="Komai F."/>
            <person name="Hara R."/>
            <person name="Takeuchi K."/>
            <person name="Arita M."/>
            <person name="Imose N."/>
            <person name="Musashino K."/>
            <person name="Yuuki H."/>
            <person name="Oshima A."/>
            <person name="Sasaki N."/>
            <person name="Aotsuka S."/>
            <person name="Yoshikawa Y."/>
            <person name="Matsunawa H."/>
            <person name="Ichihara T."/>
            <person name="Shiohata N."/>
            <person name="Sano S."/>
            <person name="Moriya S."/>
            <person name="Momiyama H."/>
            <person name="Satoh N."/>
            <person name="Takami S."/>
            <person name="Terashima Y."/>
            <person name="Suzuki O."/>
            <person name="Nakagawa S."/>
            <person name="Senoh A."/>
            <person name="Mizoguchi H."/>
            <person name="Goto Y."/>
            <person name="Shimizu F."/>
            <person name="Wakebe H."/>
            <person name="Hishigaki H."/>
            <person name="Watanabe T."/>
            <person name="Sugiyama A."/>
            <person name="Takemoto M."/>
            <person name="Kawakami B."/>
            <person name="Yamazaki M."/>
            <person name="Watanabe K."/>
            <person name="Kumagai A."/>
            <person name="Itakura S."/>
            <person name="Fukuzumi Y."/>
            <person name="Fujimori Y."/>
            <person name="Komiyama M."/>
            <person name="Tashiro H."/>
            <person name="Tanigami A."/>
            <person name="Fujiwara T."/>
            <person name="Ono T."/>
            <person name="Yamada K."/>
            <person name="Fujii Y."/>
            <person name="Ozaki K."/>
            <person name="Hirao M."/>
            <person name="Ohmori Y."/>
            <person name="Kawabata A."/>
            <person name="Hikiji T."/>
            <person name="Kobatake N."/>
            <person name="Inagaki H."/>
            <person name="Ikema Y."/>
            <person name="Okamoto S."/>
            <person name="Okitani R."/>
            <person name="Kawakami T."/>
            <person name="Noguchi S."/>
            <person name="Itoh T."/>
            <person name="Shigeta K."/>
            <person name="Senba T."/>
            <person name="Matsumura K."/>
            <person name="Nakajima Y."/>
            <person name="Mizuno T."/>
            <person name="Morinaga M."/>
            <person name="Sasaki M."/>
            <person name="Togashi T."/>
            <person name="Oyama M."/>
            <person name="Hata H."/>
            <person name="Watanabe M."/>
            <person name="Komatsu T."/>
            <person name="Mizushima-Sugano J."/>
            <person name="Satoh T."/>
            <person name="Shirai Y."/>
            <person name="Takahashi Y."/>
            <person name="Nakagawa K."/>
            <person name="Okumura K."/>
            <person name="Nagase T."/>
            <person name="Nomura N."/>
            <person name="Kikuchi H."/>
            <person name="Masuho Y."/>
            <person name="Yamashita R."/>
            <person name="Nakai K."/>
            <person name="Yada T."/>
            <person name="Nakamura Y."/>
            <person name="Ohara O."/>
            <person name="Isogai T."/>
            <person name="Sugano S."/>
        </authorList>
    </citation>
    <scope>NUCLEOTIDE SEQUENCE [LARGE SCALE MRNA] (ISOFORM 4)</scope>
    <source>
        <tissue>Hippocampus</tissue>
    </source>
</reference>
<reference key="2">
    <citation type="journal article" date="2004" name="Oncogene">
        <title>Expression profiling and differential screening between hepatoblastomas and the corresponding normal livers: identification of high expression of the PLK1 oncogene as a poor-prognostic indicator of hepatoblastomas.</title>
        <authorList>
            <person name="Yamada S."/>
            <person name="Ohira M."/>
            <person name="Horie H."/>
            <person name="Ando K."/>
            <person name="Takayasu H."/>
            <person name="Suzuki Y."/>
            <person name="Sugano S."/>
            <person name="Hirata T."/>
            <person name="Goto T."/>
            <person name="Matsunaga T."/>
            <person name="Hiyama E."/>
            <person name="Hayashi Y."/>
            <person name="Ando H."/>
            <person name="Suita S."/>
            <person name="Kaneko M."/>
            <person name="Sasaki F."/>
            <person name="Hashizume K."/>
            <person name="Ohnuma N."/>
            <person name="Nakagawara A."/>
        </authorList>
    </citation>
    <scope>NUCLEOTIDE SEQUENCE [LARGE SCALE MRNA] (ISOFORM 1)</scope>
    <source>
        <tissue>Liver</tissue>
    </source>
</reference>
<reference key="3">
    <citation type="journal article" date="2005" name="Nature">
        <title>DNA sequence and analysis of human chromosome 18.</title>
        <authorList>
            <person name="Nusbaum C."/>
            <person name="Zody M.C."/>
            <person name="Borowsky M.L."/>
            <person name="Kamal M."/>
            <person name="Kodira C.D."/>
            <person name="Taylor T.D."/>
            <person name="Whittaker C.A."/>
            <person name="Chang J.L."/>
            <person name="Cuomo C.A."/>
            <person name="Dewar K."/>
            <person name="FitzGerald M.G."/>
            <person name="Yang X."/>
            <person name="Abouelleil A."/>
            <person name="Allen N.R."/>
            <person name="Anderson S."/>
            <person name="Bloom T."/>
            <person name="Bugalter B."/>
            <person name="Butler J."/>
            <person name="Cook A."/>
            <person name="DeCaprio D."/>
            <person name="Engels R."/>
            <person name="Garber M."/>
            <person name="Gnirke A."/>
            <person name="Hafez N."/>
            <person name="Hall J.L."/>
            <person name="Norman C.H."/>
            <person name="Itoh T."/>
            <person name="Jaffe D.B."/>
            <person name="Kuroki Y."/>
            <person name="Lehoczky J."/>
            <person name="Lui A."/>
            <person name="Macdonald P."/>
            <person name="Mauceli E."/>
            <person name="Mikkelsen T.S."/>
            <person name="Naylor J.W."/>
            <person name="Nicol R."/>
            <person name="Nguyen C."/>
            <person name="Noguchi H."/>
            <person name="O'Leary S.B."/>
            <person name="Piqani B."/>
            <person name="Smith C.L."/>
            <person name="Talamas J.A."/>
            <person name="Topham K."/>
            <person name="Totoki Y."/>
            <person name="Toyoda A."/>
            <person name="Wain H.M."/>
            <person name="Young S.K."/>
            <person name="Zeng Q."/>
            <person name="Zimmer A.R."/>
            <person name="Fujiyama A."/>
            <person name="Hattori M."/>
            <person name="Birren B.W."/>
            <person name="Sakaki Y."/>
            <person name="Lander E.S."/>
        </authorList>
    </citation>
    <scope>NUCLEOTIDE SEQUENCE [LARGE SCALE GENOMIC DNA]</scope>
</reference>
<reference key="4">
    <citation type="journal article" date="2004" name="Genome Res.">
        <title>The status, quality, and expansion of the NIH full-length cDNA project: the Mammalian Gene Collection (MGC).</title>
        <authorList>
            <consortium name="The MGC Project Team"/>
        </authorList>
    </citation>
    <scope>NUCLEOTIDE SEQUENCE [LARGE SCALE MRNA] (ISOFORMS 1; 2 AND 3)</scope>
    <source>
        <tissue>Lung</tissue>
        <tissue>Pancreas</tissue>
        <tissue>Testis</tissue>
    </source>
</reference>
<reference key="5">
    <citation type="journal article" date="2007" name="BMC Genomics">
        <title>The full-ORF clone resource of the German cDNA consortium.</title>
        <authorList>
            <person name="Bechtel S."/>
            <person name="Rosenfelder H."/>
            <person name="Duda A."/>
            <person name="Schmidt C.P."/>
            <person name="Ernst U."/>
            <person name="Wellenreuther R."/>
            <person name="Mehrle A."/>
            <person name="Schuster C."/>
            <person name="Bahr A."/>
            <person name="Bloecker H."/>
            <person name="Heubner D."/>
            <person name="Hoerlein A."/>
            <person name="Michel G."/>
            <person name="Wedler H."/>
            <person name="Koehrer K."/>
            <person name="Ottenwaelder B."/>
            <person name="Poustka A."/>
            <person name="Wiemann S."/>
            <person name="Schupp I."/>
        </authorList>
    </citation>
    <scope>NUCLEOTIDE SEQUENCE [LARGE SCALE MRNA] OF 32-300 (ISOFORM 2)</scope>
    <source>
        <tissue>Uterus</tissue>
    </source>
</reference>
<reference key="6">
    <citation type="journal article" date="2004" name="Oncogene">
        <title>Suppression subtractive hybridization and expression profiling identifies a unique set of genes overexpressed in non-small-cell lung cancer.</title>
        <authorList>
            <person name="Petroziello J."/>
            <person name="Yamane A."/>
            <person name="Westendorf L."/>
            <person name="Thompson M."/>
            <person name="McDonagh C."/>
            <person name="Cerveny C."/>
            <person name="Law C.-L."/>
            <person name="Wahl A."/>
            <person name="Carter P."/>
        </authorList>
    </citation>
    <scope>NUCLEOTIDE SEQUENCE [MRNA] OF 61-300 (ISOFORM 2)</scope>
    <scope>SUBCELLULAR LOCATION</scope>
</reference>
<reference key="7">
    <citation type="journal article" date="2022" name="Cell Res.">
        <title>Regulators of tubulin polyglutamylation control nuclear shape and cilium disassembly by balancing microtubule and actin assembly.</title>
        <authorList>
            <person name="Wang L."/>
            <person name="Paudyal S.C."/>
            <person name="Kang Y."/>
            <person name="Owa M."/>
            <person name="Liang F.X."/>
            <person name="Spektor A."/>
            <person name="Knaut H."/>
            <person name="Sanchez I."/>
            <person name="Dynlacht B.D."/>
        </authorList>
    </citation>
    <scope>FUNCTION</scope>
    <scope>INTERACTION WITH CSTPP1 AND LRRC49</scope>
    <scope>SUBCELLULAR LOCATION</scope>
</reference>
<sequence length="300" mass="33318">MEEEASSPGLGCSKPHLEKLTLGITRILESSPGVTEVTIIEKPPAERHMISSWEQKNNCVMPEDVKNFYLMTNGFHMTWSVKLDEHIIPLGSMAINSISKLTQLTQSSMYSLPNAPTLADLEDDTHEASDDQPEKPHFDSRSVIFELDSCNGSGKVCLVYKSGKPALAEDTEIWFLDRALYWHFLTDTFTAYYRLLITHLGLPQWQYAFTSYGISPQAKQWFSMYKPITYNTNLLTEETDSFVNKLDPSKVFKSKNKIVIPKKKGPVQPAGGQKGPSGPSGPSTSSTSKSSSGSGNPTRK</sequence>
<feature type="chain" id="PRO_0000079304" description="Tubulin polyglutamylase complex subunit 2">
    <location>
        <begin position="1"/>
        <end position="300"/>
    </location>
</feature>
<feature type="region of interest" description="Disordered" evidence="1">
    <location>
        <begin position="257"/>
        <end position="300"/>
    </location>
</feature>
<feature type="compositionally biased region" description="Low complexity" evidence="1">
    <location>
        <begin position="276"/>
        <end position="300"/>
    </location>
</feature>
<feature type="splice variant" id="VSP_020113" description="In isoform 1." evidence="4 5">
    <location>
        <begin position="85"/>
        <end position="127"/>
    </location>
</feature>
<feature type="splice variant" id="VSP_054525" description="In isoform 4." evidence="3">
    <location>
        <begin position="85"/>
        <end position="119"/>
    </location>
</feature>
<feature type="splice variant" id="VSP_055634" description="In isoform 5." evidence="6">
    <original>QWFSMYKPITYNTNLLTEETDSFVNKLDPSKVFKSKNKIVIPKKKGPVQPAGGQKGPSGPSGPSTSSTSKSSSGSGNPTRK</original>
    <variation>ITYNIKMNRRKCVHWKLAVEPLQWELRSCVSAGMGTGHKQRVSSMKPRSCSVCSRRQSNSMGTTVSQSFLSYGKNVLFFTVRCCF</variation>
    <location>
        <begin position="220"/>
        <end position="300"/>
    </location>
</feature>
<feature type="splice variant" id="VSP_014884" description="In isoform 3." evidence="5">
    <original>QWFSMYKP</original>
    <variation>VREEHLPL</variation>
    <location>
        <begin position="220"/>
        <end position="227"/>
    </location>
</feature>
<feature type="splice variant" id="VSP_014885" description="In isoform 3." evidence="5">
    <location>
        <begin position="228"/>
        <end position="300"/>
    </location>
</feature>
<feature type="sequence variant" id="VAR_027410" description="In dbSNP:rs2303507.">
    <original>R</original>
    <variation>C</variation>
    <location>
        <position position="47"/>
    </location>
</feature>
<feature type="sequence conflict" description="In Ref. 5; CAB43322." evidence="6" ref="5">
    <original>P</original>
    <variation>S</variation>
    <location>
        <position position="44"/>
    </location>
</feature>
<comment type="function">
    <text evidence="7">Subunit of the tubulin polyglutamylase complex (TPGC). The complex mediates cilia and flagella polyglutamylation which is essential for their biogenesis and motility.</text>
</comment>
<comment type="subunit">
    <text evidence="2 7">Part of the neuronal tubulin polyglutamylase complex which contains TPGS1, TPGS2, TTLL1, LRRC49 and NICN1 (Probable). Interacts with CSTPP1 and LRRC49 (PubMed:34782749).</text>
</comment>
<comment type="interaction">
    <interactant intactId="EBI-748091">
        <id>Q68CL5</id>
    </interactant>
    <interactant intactId="EBI-12865884">
        <id>Q5XKR4</id>
        <label>OTP</label>
    </interactant>
    <organismsDiffer>false</organismsDiffer>
    <experiments>3</experiments>
</comment>
<comment type="interaction">
    <interactant intactId="EBI-9091010">
        <id>Q68CL5-3</id>
    </interactant>
    <interactant intactId="EBI-1049597">
        <id>P27797</id>
        <label>CALR</label>
    </interactant>
    <organismsDiffer>false</organismsDiffer>
    <experiments>3</experiments>
</comment>
<comment type="interaction">
    <interactant intactId="EBI-9091010">
        <id>Q68CL5-3</id>
    </interactant>
    <interactant intactId="EBI-351007">
        <id>P36957</id>
        <label>DLST</label>
    </interactant>
    <organismsDiffer>false</organismsDiffer>
    <experiments>3</experiments>
</comment>
<comment type="interaction">
    <interactant intactId="EBI-9091010">
        <id>Q68CL5-3</id>
    </interactant>
    <interactant intactId="EBI-1055945">
        <id>Q8TDX7</id>
        <label>NEK7</label>
    </interactant>
    <organismsDiffer>false</organismsDiffer>
    <experiments>3</experiments>
</comment>
<comment type="subcellular location">
    <subcellularLocation>
        <location evidence="2">Cytoplasm</location>
        <location evidence="2">Cytoskeleton</location>
    </subcellularLocation>
    <subcellularLocation>
        <location evidence="2">Cytoplasm</location>
        <location evidence="2">Cytoskeleton</location>
        <location evidence="2">Microtubule organizing center</location>
        <location evidence="2">Centrosome</location>
        <location evidence="2">Centriolar satellite</location>
    </subcellularLocation>
    <text evidence="2">Associated with microtubules.</text>
</comment>
<comment type="alternative products">
    <event type="alternative splicing"/>
    <isoform>
        <id>Q68CL5-2</id>
        <name>2</name>
        <sequence type="displayed"/>
    </isoform>
    <isoform>
        <id>Q68CL5-1</id>
        <name>1</name>
        <sequence type="described" ref="VSP_020113"/>
    </isoform>
    <isoform>
        <id>Q68CL5-3</id>
        <name>3</name>
        <sequence type="described" ref="VSP_014884 VSP_014885"/>
    </isoform>
    <isoform>
        <id>Q68CL5-4</id>
        <name>4</name>
        <sequence type="described" ref="VSP_054525"/>
    </isoform>
    <isoform>
        <id>Q68CL5-5</id>
        <name>5</name>
        <sequence type="described" ref="VSP_055634"/>
    </isoform>
</comment>
<comment type="sequence caution" evidence="6">
    <conflict type="erroneous initiation">
        <sequence resource="EMBL-CDS" id="AAH22199"/>
    </conflict>
    <text>Truncated N-terminus.</text>
</comment>
<comment type="sequence caution" evidence="6">
    <conflict type="erroneous initiation">
        <sequence resource="EMBL-CDS" id="CAB43322"/>
    </conflict>
    <text>Truncated N-terminus.</text>
</comment>
<accession>Q68CL5</accession>
<accession>B4DIX2</accession>
<accession>K7EIJ9</accession>
<accession>Q4KN59</accession>
<accession>Q8WTU3</accession>
<accession>Q96BT9</accession>
<accession>Q9Y435</accession>
<name>TPGS2_HUMAN</name>
<protein>
    <recommendedName>
        <fullName>Tubulin polyglutamylase complex subunit 2</fullName>
        <shortName>PGs2</shortName>
    </recommendedName>
</protein>
<organism>
    <name type="scientific">Homo sapiens</name>
    <name type="common">Human</name>
    <dbReference type="NCBI Taxonomy" id="9606"/>
    <lineage>
        <taxon>Eukaryota</taxon>
        <taxon>Metazoa</taxon>
        <taxon>Chordata</taxon>
        <taxon>Craniata</taxon>
        <taxon>Vertebrata</taxon>
        <taxon>Euteleostomi</taxon>
        <taxon>Mammalia</taxon>
        <taxon>Eutheria</taxon>
        <taxon>Euarchontoglires</taxon>
        <taxon>Primates</taxon>
        <taxon>Haplorrhini</taxon>
        <taxon>Catarrhini</taxon>
        <taxon>Hominidae</taxon>
        <taxon>Homo</taxon>
    </lineage>
</organism>